<gene>
    <name type="primary">SMIM15</name>
    <name type="ORF">RCJMB04_3o3</name>
</gene>
<proteinExistence type="inferred from homology"/>
<evidence type="ECO:0000255" key="1"/>
<evidence type="ECO:0000256" key="2">
    <source>
        <dbReference type="SAM" id="MobiDB-lite"/>
    </source>
</evidence>
<evidence type="ECO:0000305" key="3"/>
<dbReference type="EMBL" id="AJ851491">
    <property type="protein sequence ID" value="CAH65125.1"/>
    <property type="molecule type" value="mRNA"/>
</dbReference>
<dbReference type="RefSeq" id="NP_001186160.1">
    <property type="nucleotide sequence ID" value="NM_001199231.3"/>
</dbReference>
<dbReference type="RefSeq" id="XP_015132855.1">
    <property type="nucleotide sequence ID" value="XM_015277369.4"/>
</dbReference>
<dbReference type="RefSeq" id="XP_015132856.1">
    <property type="nucleotide sequence ID" value="XM_015277370.4"/>
</dbReference>
<dbReference type="RefSeq" id="XP_046791339.1">
    <property type="nucleotide sequence ID" value="XM_046935383.1"/>
</dbReference>
<dbReference type="RefSeq" id="XP_046791340.1">
    <property type="nucleotide sequence ID" value="XM_046935384.1"/>
</dbReference>
<dbReference type="SMR" id="Q5F409"/>
<dbReference type="FunCoup" id="Q5F409">
    <property type="interactions" value="770"/>
</dbReference>
<dbReference type="PaxDb" id="9031-ENSGALP00000037976"/>
<dbReference type="Ensembl" id="ENSGALT00010030390.1">
    <property type="protein sequence ID" value="ENSGALP00010017626.1"/>
    <property type="gene ID" value="ENSGALG00010012704.1"/>
</dbReference>
<dbReference type="GeneID" id="770642"/>
<dbReference type="KEGG" id="gga:770642"/>
<dbReference type="CTD" id="643155"/>
<dbReference type="VEuPathDB" id="HostDB:geneid_770642"/>
<dbReference type="eggNOG" id="ENOG502SDBQ">
    <property type="taxonomic scope" value="Eukaryota"/>
</dbReference>
<dbReference type="GeneTree" id="ENSGT00940000165045"/>
<dbReference type="HOGENOM" id="CLU_2687094_0_0_1"/>
<dbReference type="InParanoid" id="Q5F409"/>
<dbReference type="OMA" id="MIDFRAW"/>
<dbReference type="OrthoDB" id="6282848at2759"/>
<dbReference type="PhylomeDB" id="Q5F409"/>
<dbReference type="TreeFam" id="TF328386"/>
<dbReference type="PRO" id="PR:Q5F409"/>
<dbReference type="Proteomes" id="UP000000539">
    <property type="component" value="Chromosome Z"/>
</dbReference>
<dbReference type="Bgee" id="ENSGALG00000023443">
    <property type="expression patterns" value="Expressed in colon and 14 other cell types or tissues"/>
</dbReference>
<dbReference type="GO" id="GO:0016020">
    <property type="term" value="C:membrane"/>
    <property type="evidence" value="ECO:0007669"/>
    <property type="project" value="UniProtKB-SubCell"/>
</dbReference>
<dbReference type="InterPro" id="IPR027877">
    <property type="entry name" value="Smim15"/>
</dbReference>
<dbReference type="PANTHER" id="PTHR28644">
    <property type="entry name" value="SMALL INTEGRAL MEMBRANE PROTEIN 15"/>
    <property type="match status" value="1"/>
</dbReference>
<dbReference type="PANTHER" id="PTHR28644:SF1">
    <property type="entry name" value="SMALL INTEGRAL MEMBRANE PROTEIN 15"/>
    <property type="match status" value="1"/>
</dbReference>
<dbReference type="Pfam" id="PF15086">
    <property type="entry name" value="UPF0542"/>
    <property type="match status" value="1"/>
</dbReference>
<reference key="1">
    <citation type="journal article" date="2005" name="Genome Biol.">
        <title>Full-length cDNAs from chicken bursal lymphocytes to facilitate gene function analysis.</title>
        <authorList>
            <person name="Caldwell R.B."/>
            <person name="Kierzek A.M."/>
            <person name="Arakawa H."/>
            <person name="Bezzubov Y."/>
            <person name="Zaim J."/>
            <person name="Fiedler P."/>
            <person name="Kutter S."/>
            <person name="Blagodatski A."/>
            <person name="Kostovska D."/>
            <person name="Koter M."/>
            <person name="Plachy J."/>
            <person name="Carninci P."/>
            <person name="Hayashizaki Y."/>
            <person name="Buerstedde J.-M."/>
        </authorList>
    </citation>
    <scope>NUCLEOTIDE SEQUENCE [LARGE SCALE MRNA]</scope>
    <source>
        <strain>CB</strain>
        <tissue>Bursa of Fabricius</tissue>
    </source>
</reference>
<feature type="chain" id="PRO_0000326078" description="Small integral membrane protein 15">
    <location>
        <begin position="1"/>
        <end position="74"/>
    </location>
</feature>
<feature type="transmembrane region" description="Helical" evidence="1">
    <location>
        <begin position="20"/>
        <end position="40"/>
    </location>
</feature>
<feature type="region of interest" description="Disordered" evidence="2">
    <location>
        <begin position="53"/>
        <end position="74"/>
    </location>
</feature>
<feature type="coiled-coil region" evidence="1">
    <location>
        <begin position="48"/>
        <end position="74"/>
    </location>
</feature>
<feature type="compositionally biased region" description="Basic residues" evidence="2">
    <location>
        <begin position="56"/>
        <end position="74"/>
    </location>
</feature>
<sequence length="74" mass="8709">MFDVKAWAVYIVEWAAKDPYGFLTTVILVLTPLFIISAALSWKLAKMIETREREQKKKRKRQENIVKAKRAKKD</sequence>
<accession>Q5F409</accession>
<protein>
    <recommendedName>
        <fullName>Small integral membrane protein 15</fullName>
    </recommendedName>
</protein>
<organism>
    <name type="scientific">Gallus gallus</name>
    <name type="common">Chicken</name>
    <dbReference type="NCBI Taxonomy" id="9031"/>
    <lineage>
        <taxon>Eukaryota</taxon>
        <taxon>Metazoa</taxon>
        <taxon>Chordata</taxon>
        <taxon>Craniata</taxon>
        <taxon>Vertebrata</taxon>
        <taxon>Euteleostomi</taxon>
        <taxon>Archelosauria</taxon>
        <taxon>Archosauria</taxon>
        <taxon>Dinosauria</taxon>
        <taxon>Saurischia</taxon>
        <taxon>Theropoda</taxon>
        <taxon>Coelurosauria</taxon>
        <taxon>Aves</taxon>
        <taxon>Neognathae</taxon>
        <taxon>Galloanserae</taxon>
        <taxon>Galliformes</taxon>
        <taxon>Phasianidae</taxon>
        <taxon>Phasianinae</taxon>
        <taxon>Gallus</taxon>
    </lineage>
</organism>
<name>SIM15_CHICK</name>
<keyword id="KW-0175">Coiled coil</keyword>
<keyword id="KW-0472">Membrane</keyword>
<keyword id="KW-1185">Reference proteome</keyword>
<keyword id="KW-0812">Transmembrane</keyword>
<keyword id="KW-1133">Transmembrane helix</keyword>
<comment type="subcellular location">
    <subcellularLocation>
        <location evidence="3">Membrane</location>
        <topology evidence="3">Single-pass membrane protein</topology>
    </subcellularLocation>
</comment>
<comment type="similarity">
    <text evidence="3">Belongs to the SMIM15 family.</text>
</comment>